<name>RSMH_DEIGD</name>
<evidence type="ECO:0000255" key="1">
    <source>
        <dbReference type="HAMAP-Rule" id="MF_01007"/>
    </source>
</evidence>
<evidence type="ECO:0000256" key="2">
    <source>
        <dbReference type="SAM" id="MobiDB-lite"/>
    </source>
</evidence>
<feature type="chain" id="PRO_0000386842" description="Ribosomal RNA small subunit methyltransferase H">
    <location>
        <begin position="1"/>
        <end position="308"/>
    </location>
</feature>
<feature type="region of interest" description="Disordered" evidence="2">
    <location>
        <begin position="269"/>
        <end position="308"/>
    </location>
</feature>
<feature type="compositionally biased region" description="Basic and acidic residues" evidence="2">
    <location>
        <begin position="271"/>
        <end position="282"/>
    </location>
</feature>
<feature type="binding site" evidence="1">
    <location>
        <begin position="46"/>
        <end position="48"/>
    </location>
    <ligand>
        <name>S-adenosyl-L-methionine</name>
        <dbReference type="ChEBI" id="CHEBI:59789"/>
    </ligand>
</feature>
<feature type="binding site" evidence="1">
    <location>
        <position position="63"/>
    </location>
    <ligand>
        <name>S-adenosyl-L-methionine</name>
        <dbReference type="ChEBI" id="CHEBI:59789"/>
    </ligand>
</feature>
<feature type="binding site" evidence="1">
    <location>
        <position position="87"/>
    </location>
    <ligand>
        <name>S-adenosyl-L-methionine</name>
        <dbReference type="ChEBI" id="CHEBI:59789"/>
    </ligand>
</feature>
<feature type="binding site" evidence="1">
    <location>
        <position position="108"/>
    </location>
    <ligand>
        <name>S-adenosyl-L-methionine</name>
        <dbReference type="ChEBI" id="CHEBI:59789"/>
    </ligand>
</feature>
<feature type="binding site" evidence="1">
    <location>
        <position position="115"/>
    </location>
    <ligand>
        <name>S-adenosyl-L-methionine</name>
        <dbReference type="ChEBI" id="CHEBI:59789"/>
    </ligand>
</feature>
<gene>
    <name evidence="1" type="primary">rsmH</name>
    <name type="synonym">mraW</name>
    <name type="ordered locus">Dgeo_0766</name>
</gene>
<dbReference type="EC" id="2.1.1.199" evidence="1"/>
<dbReference type="EMBL" id="CP000359">
    <property type="protein sequence ID" value="ABF45068.1"/>
    <property type="molecule type" value="Genomic_DNA"/>
</dbReference>
<dbReference type="RefSeq" id="WP_011529909.1">
    <property type="nucleotide sequence ID" value="NC_008025.1"/>
</dbReference>
<dbReference type="SMR" id="Q1J0B6"/>
<dbReference type="STRING" id="319795.Dgeo_0766"/>
<dbReference type="KEGG" id="dge:Dgeo_0766"/>
<dbReference type="eggNOG" id="COG0275">
    <property type="taxonomic scope" value="Bacteria"/>
</dbReference>
<dbReference type="HOGENOM" id="CLU_038422_1_1_0"/>
<dbReference type="Proteomes" id="UP000002431">
    <property type="component" value="Chromosome"/>
</dbReference>
<dbReference type="GO" id="GO:0005737">
    <property type="term" value="C:cytoplasm"/>
    <property type="evidence" value="ECO:0007669"/>
    <property type="project" value="UniProtKB-SubCell"/>
</dbReference>
<dbReference type="GO" id="GO:0071424">
    <property type="term" value="F:rRNA (cytosine-N4-)-methyltransferase activity"/>
    <property type="evidence" value="ECO:0007669"/>
    <property type="project" value="UniProtKB-UniRule"/>
</dbReference>
<dbReference type="GO" id="GO:0070475">
    <property type="term" value="P:rRNA base methylation"/>
    <property type="evidence" value="ECO:0007669"/>
    <property type="project" value="UniProtKB-UniRule"/>
</dbReference>
<dbReference type="FunFam" id="1.10.150.170:FF:000003">
    <property type="entry name" value="Ribosomal RNA small subunit methyltransferase H"/>
    <property type="match status" value="1"/>
</dbReference>
<dbReference type="Gene3D" id="1.10.150.170">
    <property type="entry name" value="Putative methyltransferase TM0872, insert domain"/>
    <property type="match status" value="1"/>
</dbReference>
<dbReference type="Gene3D" id="3.40.50.150">
    <property type="entry name" value="Vaccinia Virus protein VP39"/>
    <property type="match status" value="1"/>
</dbReference>
<dbReference type="HAMAP" id="MF_01007">
    <property type="entry name" value="16SrRNA_methyltr_H"/>
    <property type="match status" value="1"/>
</dbReference>
<dbReference type="InterPro" id="IPR002903">
    <property type="entry name" value="RsmH"/>
</dbReference>
<dbReference type="InterPro" id="IPR023397">
    <property type="entry name" value="SAM-dep_MeTrfase_MraW_recog"/>
</dbReference>
<dbReference type="InterPro" id="IPR029063">
    <property type="entry name" value="SAM-dependent_MTases_sf"/>
</dbReference>
<dbReference type="NCBIfam" id="TIGR00006">
    <property type="entry name" value="16S rRNA (cytosine(1402)-N(4))-methyltransferase RsmH"/>
    <property type="match status" value="1"/>
</dbReference>
<dbReference type="PANTHER" id="PTHR11265:SF0">
    <property type="entry name" value="12S RRNA N4-METHYLCYTIDINE METHYLTRANSFERASE"/>
    <property type="match status" value="1"/>
</dbReference>
<dbReference type="PANTHER" id="PTHR11265">
    <property type="entry name" value="S-ADENOSYL-METHYLTRANSFERASE MRAW"/>
    <property type="match status" value="1"/>
</dbReference>
<dbReference type="Pfam" id="PF01795">
    <property type="entry name" value="Methyltransf_5"/>
    <property type="match status" value="1"/>
</dbReference>
<dbReference type="PIRSF" id="PIRSF004486">
    <property type="entry name" value="MraW"/>
    <property type="match status" value="1"/>
</dbReference>
<dbReference type="SUPFAM" id="SSF81799">
    <property type="entry name" value="Putative methyltransferase TM0872, insert domain"/>
    <property type="match status" value="1"/>
</dbReference>
<dbReference type="SUPFAM" id="SSF53335">
    <property type="entry name" value="S-adenosyl-L-methionine-dependent methyltransferases"/>
    <property type="match status" value="1"/>
</dbReference>
<keyword id="KW-0963">Cytoplasm</keyword>
<keyword id="KW-0489">Methyltransferase</keyword>
<keyword id="KW-0698">rRNA processing</keyword>
<keyword id="KW-0949">S-adenosyl-L-methionine</keyword>
<keyword id="KW-0808">Transferase</keyword>
<reference key="1">
    <citation type="submission" date="2006-04" db="EMBL/GenBank/DDBJ databases">
        <title>Complete sequence of chromosome of Deinococcus geothermalis DSM 11300.</title>
        <authorList>
            <person name="Copeland A."/>
            <person name="Lucas S."/>
            <person name="Lapidus A."/>
            <person name="Barry K."/>
            <person name="Detter J.C."/>
            <person name="Glavina del Rio T."/>
            <person name="Hammon N."/>
            <person name="Israni S."/>
            <person name="Dalin E."/>
            <person name="Tice H."/>
            <person name="Pitluck S."/>
            <person name="Brettin T."/>
            <person name="Bruce D."/>
            <person name="Han C."/>
            <person name="Tapia R."/>
            <person name="Saunders E."/>
            <person name="Gilna P."/>
            <person name="Schmutz J."/>
            <person name="Larimer F."/>
            <person name="Land M."/>
            <person name="Hauser L."/>
            <person name="Kyrpides N."/>
            <person name="Kim E."/>
            <person name="Daly M.J."/>
            <person name="Fredrickson J.K."/>
            <person name="Makarova K.S."/>
            <person name="Gaidamakova E.K."/>
            <person name="Zhai M."/>
            <person name="Richardson P."/>
        </authorList>
    </citation>
    <scope>NUCLEOTIDE SEQUENCE [LARGE SCALE GENOMIC DNA]</scope>
    <source>
        <strain>DSM 11300 / CIP 105573 / AG-3a</strain>
    </source>
</reference>
<accession>Q1J0B6</accession>
<protein>
    <recommendedName>
        <fullName evidence="1">Ribosomal RNA small subunit methyltransferase H</fullName>
        <ecNumber evidence="1">2.1.1.199</ecNumber>
    </recommendedName>
    <alternativeName>
        <fullName evidence="1">16S rRNA m(4)C1402 methyltransferase</fullName>
    </alternativeName>
    <alternativeName>
        <fullName evidence="1">rRNA (cytosine-N(4)-)-methyltransferase RsmH</fullName>
    </alternativeName>
</protein>
<organism>
    <name type="scientific">Deinococcus geothermalis (strain DSM 11300 / CIP 105573 / AG-3a)</name>
    <dbReference type="NCBI Taxonomy" id="319795"/>
    <lineage>
        <taxon>Bacteria</taxon>
        <taxon>Thermotogati</taxon>
        <taxon>Deinococcota</taxon>
        <taxon>Deinococci</taxon>
        <taxon>Deinococcales</taxon>
        <taxon>Deinococcaceae</taxon>
        <taxon>Deinococcus</taxon>
    </lineage>
</organism>
<sequence length="308" mass="33202">MNTAPSPSDRPLSHALSHTPVLAAEVVAALAPAPGRVIVDGTLGGAGHTRLLLEAGASVIGIDQDPYALNRAREAQLPQLTVLEGNYRDMRELLAGIGVTQVDGVLLDIGVSSFQLDDAARGFSYHTDAPLDMRMAQSGESAAEVVNGYPEEELAAIIYEYGEERHSRRIARAIVQARTQAPIQSTVQLAEIIKRAYPGFSKGIHPARRTFQALRIHVNDELGALRDGLRAAEALLTPGGRLAVIAFHSLEDRIVKRFLRASPTLKSLTKRPVEASEEERGRNPRARSAKLRAAEKVAAPEGLPEVEV</sequence>
<comment type="function">
    <text evidence="1">Specifically methylates the N4 position of cytidine in position 1402 (C1402) of 16S rRNA.</text>
</comment>
<comment type="catalytic activity">
    <reaction evidence="1">
        <text>cytidine(1402) in 16S rRNA + S-adenosyl-L-methionine = N(4)-methylcytidine(1402) in 16S rRNA + S-adenosyl-L-homocysteine + H(+)</text>
        <dbReference type="Rhea" id="RHEA:42928"/>
        <dbReference type="Rhea" id="RHEA-COMP:10286"/>
        <dbReference type="Rhea" id="RHEA-COMP:10287"/>
        <dbReference type="ChEBI" id="CHEBI:15378"/>
        <dbReference type="ChEBI" id="CHEBI:57856"/>
        <dbReference type="ChEBI" id="CHEBI:59789"/>
        <dbReference type="ChEBI" id="CHEBI:74506"/>
        <dbReference type="ChEBI" id="CHEBI:82748"/>
        <dbReference type="EC" id="2.1.1.199"/>
    </reaction>
</comment>
<comment type="subcellular location">
    <subcellularLocation>
        <location evidence="1">Cytoplasm</location>
    </subcellularLocation>
</comment>
<comment type="similarity">
    <text evidence="1">Belongs to the methyltransferase superfamily. RsmH family.</text>
</comment>
<proteinExistence type="inferred from homology"/>